<evidence type="ECO:0000250" key="1"/>
<evidence type="ECO:0000255" key="2">
    <source>
        <dbReference type="PROSITE-ProRule" id="PRU00156"/>
    </source>
</evidence>
<evidence type="ECO:0000305" key="3"/>
<protein>
    <recommendedName>
        <fullName>Peptidyl-prolyl cis-trans isomerase-like 1</fullName>
        <shortName>PPIase</shortName>
        <ecNumber>5.2.1.8</ecNumber>
    </recommendedName>
    <alternativeName>
        <fullName>Rotamase</fullName>
    </alternativeName>
</protein>
<proteinExistence type="inferred from homology"/>
<name>PPIL1_ASPOR</name>
<dbReference type="EC" id="5.2.1.8"/>
<dbReference type="EMBL" id="BA000053">
    <property type="protein sequence ID" value="BAE62725.1"/>
    <property type="molecule type" value="Genomic_DNA"/>
</dbReference>
<dbReference type="RefSeq" id="XP_001823858.1">
    <property type="nucleotide sequence ID" value="XM_001823806.2"/>
</dbReference>
<dbReference type="SMR" id="Q2U6U0"/>
<dbReference type="STRING" id="510516.Q2U6U0"/>
<dbReference type="EnsemblFungi" id="BAE62725">
    <property type="protein sequence ID" value="BAE62725"/>
    <property type="gene ID" value="AO090120000099"/>
</dbReference>
<dbReference type="GeneID" id="5996117"/>
<dbReference type="KEGG" id="aor:AO090120000099"/>
<dbReference type="HOGENOM" id="CLU_012062_16_3_1"/>
<dbReference type="OMA" id="ELYNDHA"/>
<dbReference type="OrthoDB" id="7451at5052"/>
<dbReference type="Proteomes" id="UP000006564">
    <property type="component" value="Chromosome 5"/>
</dbReference>
<dbReference type="GO" id="GO:0071013">
    <property type="term" value="C:catalytic step 2 spliceosome"/>
    <property type="evidence" value="ECO:0007669"/>
    <property type="project" value="TreeGrafter"/>
</dbReference>
<dbReference type="GO" id="GO:0003755">
    <property type="term" value="F:peptidyl-prolyl cis-trans isomerase activity"/>
    <property type="evidence" value="ECO:0007669"/>
    <property type="project" value="UniProtKB-KW"/>
</dbReference>
<dbReference type="GO" id="GO:0006457">
    <property type="term" value="P:protein folding"/>
    <property type="evidence" value="ECO:0007669"/>
    <property type="project" value="InterPro"/>
</dbReference>
<dbReference type="FunFam" id="2.40.100.10:FF:000008">
    <property type="entry name" value="Peptidyl-prolyl cis-trans isomerase"/>
    <property type="match status" value="1"/>
</dbReference>
<dbReference type="Gene3D" id="2.40.100.10">
    <property type="entry name" value="Cyclophilin-like"/>
    <property type="match status" value="1"/>
</dbReference>
<dbReference type="InterPro" id="IPR029000">
    <property type="entry name" value="Cyclophilin-like_dom_sf"/>
</dbReference>
<dbReference type="InterPro" id="IPR024936">
    <property type="entry name" value="Cyclophilin-type_PPIase"/>
</dbReference>
<dbReference type="InterPro" id="IPR020892">
    <property type="entry name" value="Cyclophilin-type_PPIase_CS"/>
</dbReference>
<dbReference type="InterPro" id="IPR002130">
    <property type="entry name" value="Cyclophilin-type_PPIase_dom"/>
</dbReference>
<dbReference type="InterPro" id="IPR044666">
    <property type="entry name" value="Cyclophilin_A-like"/>
</dbReference>
<dbReference type="PANTHER" id="PTHR45625">
    <property type="entry name" value="PEPTIDYL-PROLYL CIS-TRANS ISOMERASE-RELATED"/>
    <property type="match status" value="1"/>
</dbReference>
<dbReference type="PANTHER" id="PTHR45625:SF4">
    <property type="entry name" value="PEPTIDYLPROLYL ISOMERASE DOMAIN AND WD REPEAT-CONTAINING PROTEIN 1"/>
    <property type="match status" value="1"/>
</dbReference>
<dbReference type="Pfam" id="PF00160">
    <property type="entry name" value="Pro_isomerase"/>
    <property type="match status" value="1"/>
</dbReference>
<dbReference type="PIRSF" id="PIRSF001467">
    <property type="entry name" value="Peptidylpro_ismrse"/>
    <property type="match status" value="1"/>
</dbReference>
<dbReference type="PRINTS" id="PR00153">
    <property type="entry name" value="CSAPPISMRASE"/>
</dbReference>
<dbReference type="SUPFAM" id="SSF50891">
    <property type="entry name" value="Cyclophilin-like"/>
    <property type="match status" value="1"/>
</dbReference>
<dbReference type="PROSITE" id="PS00170">
    <property type="entry name" value="CSA_PPIASE_1"/>
    <property type="match status" value="1"/>
</dbReference>
<dbReference type="PROSITE" id="PS50072">
    <property type="entry name" value="CSA_PPIASE_2"/>
    <property type="match status" value="1"/>
</dbReference>
<sequence length="161" mass="17689">MATDVAFDTSMGSFTVELYNSHAPKTCKNFATLAQRGYYNNVIFHRIIPNFMVQTGDPTGTGRGGSSIYGEKFEDEIRADLKHTGAGILSMANSGPNTNGSQFFVTLAPTPWLDGKHTIFGRVKSGMRVIQRMGLVKTNGEDRPVDEVKIIRARVVEEGEE</sequence>
<gene>
    <name type="primary">cyp1</name>
    <name type="ORF">AO090120000099</name>
</gene>
<reference key="1">
    <citation type="journal article" date="2005" name="Nature">
        <title>Genome sequencing and analysis of Aspergillus oryzae.</title>
        <authorList>
            <person name="Machida M."/>
            <person name="Asai K."/>
            <person name="Sano M."/>
            <person name="Tanaka T."/>
            <person name="Kumagai T."/>
            <person name="Terai G."/>
            <person name="Kusumoto K."/>
            <person name="Arima T."/>
            <person name="Akita O."/>
            <person name="Kashiwagi Y."/>
            <person name="Abe K."/>
            <person name="Gomi K."/>
            <person name="Horiuchi H."/>
            <person name="Kitamoto K."/>
            <person name="Kobayashi T."/>
            <person name="Takeuchi M."/>
            <person name="Denning D.W."/>
            <person name="Galagan J.E."/>
            <person name="Nierman W.C."/>
            <person name="Yu J."/>
            <person name="Archer D.B."/>
            <person name="Bennett J.W."/>
            <person name="Bhatnagar D."/>
            <person name="Cleveland T.E."/>
            <person name="Fedorova N.D."/>
            <person name="Gotoh O."/>
            <person name="Horikawa H."/>
            <person name="Hosoyama A."/>
            <person name="Ichinomiya M."/>
            <person name="Igarashi R."/>
            <person name="Iwashita K."/>
            <person name="Juvvadi P.R."/>
            <person name="Kato M."/>
            <person name="Kato Y."/>
            <person name="Kin T."/>
            <person name="Kokubun A."/>
            <person name="Maeda H."/>
            <person name="Maeyama N."/>
            <person name="Maruyama J."/>
            <person name="Nagasaki H."/>
            <person name="Nakajima T."/>
            <person name="Oda K."/>
            <person name="Okada K."/>
            <person name="Paulsen I."/>
            <person name="Sakamoto K."/>
            <person name="Sawano T."/>
            <person name="Takahashi M."/>
            <person name="Takase K."/>
            <person name="Terabayashi Y."/>
            <person name="Wortman J.R."/>
            <person name="Yamada O."/>
            <person name="Yamagata Y."/>
            <person name="Anazawa H."/>
            <person name="Hata Y."/>
            <person name="Koide Y."/>
            <person name="Komori T."/>
            <person name="Koyama Y."/>
            <person name="Minetoki T."/>
            <person name="Suharnan S."/>
            <person name="Tanaka A."/>
            <person name="Isono K."/>
            <person name="Kuhara S."/>
            <person name="Ogasawara N."/>
            <person name="Kikuchi H."/>
        </authorList>
    </citation>
    <scope>NUCLEOTIDE SEQUENCE [LARGE SCALE GENOMIC DNA]</scope>
    <source>
        <strain>ATCC 42149 / RIB 40</strain>
    </source>
</reference>
<feature type="chain" id="PRO_0000232963" description="Peptidyl-prolyl cis-trans isomerase-like 1">
    <location>
        <begin position="1"/>
        <end position="161"/>
    </location>
</feature>
<feature type="domain" description="PPIase cyclophilin-type" evidence="2">
    <location>
        <begin position="1"/>
        <end position="155"/>
    </location>
</feature>
<organism>
    <name type="scientific">Aspergillus oryzae (strain ATCC 42149 / RIB 40)</name>
    <name type="common">Yellow koji mold</name>
    <dbReference type="NCBI Taxonomy" id="510516"/>
    <lineage>
        <taxon>Eukaryota</taxon>
        <taxon>Fungi</taxon>
        <taxon>Dikarya</taxon>
        <taxon>Ascomycota</taxon>
        <taxon>Pezizomycotina</taxon>
        <taxon>Eurotiomycetes</taxon>
        <taxon>Eurotiomycetidae</taxon>
        <taxon>Eurotiales</taxon>
        <taxon>Aspergillaceae</taxon>
        <taxon>Aspergillus</taxon>
        <taxon>Aspergillus subgen. Circumdati</taxon>
    </lineage>
</organism>
<comment type="function">
    <text evidence="1">PPIases accelerate the folding of proteins. It catalyzes the cis-trans isomerization of proline imidic peptide bonds in oligopeptides (By similarity).</text>
</comment>
<comment type="catalytic activity">
    <reaction>
        <text>[protein]-peptidylproline (omega=180) = [protein]-peptidylproline (omega=0)</text>
        <dbReference type="Rhea" id="RHEA:16237"/>
        <dbReference type="Rhea" id="RHEA-COMP:10747"/>
        <dbReference type="Rhea" id="RHEA-COMP:10748"/>
        <dbReference type="ChEBI" id="CHEBI:83833"/>
        <dbReference type="ChEBI" id="CHEBI:83834"/>
        <dbReference type="EC" id="5.2.1.8"/>
    </reaction>
</comment>
<comment type="similarity">
    <text evidence="3">Belongs to the cyclophilin-type PPIase family. PPIL1 subfamily.</text>
</comment>
<keyword id="KW-0413">Isomerase</keyword>
<keyword id="KW-1185">Reference proteome</keyword>
<keyword id="KW-0697">Rotamase</keyword>
<accession>Q2U6U0</accession>